<name>PFKA_BUCAP</name>
<proteinExistence type="inferred from homology"/>
<dbReference type="EC" id="2.7.1.11" evidence="1"/>
<dbReference type="EMBL" id="AE013218">
    <property type="protein sequence ID" value="AAM67850.1"/>
    <property type="molecule type" value="Genomic_DNA"/>
</dbReference>
<dbReference type="RefSeq" id="WP_011053817.1">
    <property type="nucleotide sequence ID" value="NC_004061.1"/>
</dbReference>
<dbReference type="SMR" id="Q8K9N0"/>
<dbReference type="STRING" id="198804.BUsg_295"/>
<dbReference type="GeneID" id="93003765"/>
<dbReference type="KEGG" id="bas:BUsg_295"/>
<dbReference type="eggNOG" id="COG0205">
    <property type="taxonomic scope" value="Bacteria"/>
</dbReference>
<dbReference type="HOGENOM" id="CLU_020655_0_1_6"/>
<dbReference type="UniPathway" id="UPA00109">
    <property type="reaction ID" value="UER00182"/>
</dbReference>
<dbReference type="Proteomes" id="UP000000416">
    <property type="component" value="Chromosome"/>
</dbReference>
<dbReference type="GO" id="GO:0005945">
    <property type="term" value="C:6-phosphofructokinase complex"/>
    <property type="evidence" value="ECO:0007669"/>
    <property type="project" value="TreeGrafter"/>
</dbReference>
<dbReference type="GO" id="GO:0003872">
    <property type="term" value="F:6-phosphofructokinase activity"/>
    <property type="evidence" value="ECO:0007669"/>
    <property type="project" value="UniProtKB-UniRule"/>
</dbReference>
<dbReference type="GO" id="GO:0016208">
    <property type="term" value="F:AMP binding"/>
    <property type="evidence" value="ECO:0007669"/>
    <property type="project" value="TreeGrafter"/>
</dbReference>
<dbReference type="GO" id="GO:0005524">
    <property type="term" value="F:ATP binding"/>
    <property type="evidence" value="ECO:0007669"/>
    <property type="project" value="UniProtKB-KW"/>
</dbReference>
<dbReference type="GO" id="GO:0070095">
    <property type="term" value="F:fructose-6-phosphate binding"/>
    <property type="evidence" value="ECO:0007669"/>
    <property type="project" value="TreeGrafter"/>
</dbReference>
<dbReference type="GO" id="GO:0042802">
    <property type="term" value="F:identical protein binding"/>
    <property type="evidence" value="ECO:0007669"/>
    <property type="project" value="TreeGrafter"/>
</dbReference>
<dbReference type="GO" id="GO:0046872">
    <property type="term" value="F:metal ion binding"/>
    <property type="evidence" value="ECO:0007669"/>
    <property type="project" value="UniProtKB-KW"/>
</dbReference>
<dbReference type="GO" id="GO:0048029">
    <property type="term" value="F:monosaccharide binding"/>
    <property type="evidence" value="ECO:0007669"/>
    <property type="project" value="TreeGrafter"/>
</dbReference>
<dbReference type="GO" id="GO:0061621">
    <property type="term" value="P:canonical glycolysis"/>
    <property type="evidence" value="ECO:0007669"/>
    <property type="project" value="TreeGrafter"/>
</dbReference>
<dbReference type="GO" id="GO:0030388">
    <property type="term" value="P:fructose 1,6-bisphosphate metabolic process"/>
    <property type="evidence" value="ECO:0007669"/>
    <property type="project" value="TreeGrafter"/>
</dbReference>
<dbReference type="GO" id="GO:0006002">
    <property type="term" value="P:fructose 6-phosphate metabolic process"/>
    <property type="evidence" value="ECO:0007669"/>
    <property type="project" value="InterPro"/>
</dbReference>
<dbReference type="CDD" id="cd00763">
    <property type="entry name" value="Bacterial_PFK"/>
    <property type="match status" value="1"/>
</dbReference>
<dbReference type="FunFam" id="3.40.50.450:FF:000001">
    <property type="entry name" value="ATP-dependent 6-phosphofructokinase"/>
    <property type="match status" value="1"/>
</dbReference>
<dbReference type="FunFam" id="3.40.50.460:FF:000002">
    <property type="entry name" value="ATP-dependent 6-phosphofructokinase"/>
    <property type="match status" value="1"/>
</dbReference>
<dbReference type="Gene3D" id="3.40.50.450">
    <property type="match status" value="1"/>
</dbReference>
<dbReference type="Gene3D" id="3.40.50.460">
    <property type="entry name" value="Phosphofructokinase domain"/>
    <property type="match status" value="1"/>
</dbReference>
<dbReference type="HAMAP" id="MF_00339">
    <property type="entry name" value="Phosphofructokinase_I_B1"/>
    <property type="match status" value="1"/>
</dbReference>
<dbReference type="InterPro" id="IPR022953">
    <property type="entry name" value="ATP_PFK"/>
</dbReference>
<dbReference type="InterPro" id="IPR012003">
    <property type="entry name" value="ATP_PFK_prok-type"/>
</dbReference>
<dbReference type="InterPro" id="IPR012828">
    <property type="entry name" value="PFKA_ATP_prok"/>
</dbReference>
<dbReference type="InterPro" id="IPR015912">
    <property type="entry name" value="Phosphofructokinase_CS"/>
</dbReference>
<dbReference type="InterPro" id="IPR000023">
    <property type="entry name" value="Phosphofructokinase_dom"/>
</dbReference>
<dbReference type="InterPro" id="IPR035966">
    <property type="entry name" value="PKF_sf"/>
</dbReference>
<dbReference type="NCBIfam" id="TIGR02482">
    <property type="entry name" value="PFKA_ATP"/>
    <property type="match status" value="1"/>
</dbReference>
<dbReference type="NCBIfam" id="NF002872">
    <property type="entry name" value="PRK03202.1"/>
    <property type="match status" value="1"/>
</dbReference>
<dbReference type="PANTHER" id="PTHR13697:SF4">
    <property type="entry name" value="ATP-DEPENDENT 6-PHOSPHOFRUCTOKINASE"/>
    <property type="match status" value="1"/>
</dbReference>
<dbReference type="PANTHER" id="PTHR13697">
    <property type="entry name" value="PHOSPHOFRUCTOKINASE"/>
    <property type="match status" value="1"/>
</dbReference>
<dbReference type="Pfam" id="PF00365">
    <property type="entry name" value="PFK"/>
    <property type="match status" value="1"/>
</dbReference>
<dbReference type="PIRSF" id="PIRSF000532">
    <property type="entry name" value="ATP_PFK_prok"/>
    <property type="match status" value="1"/>
</dbReference>
<dbReference type="PRINTS" id="PR00476">
    <property type="entry name" value="PHFRCTKINASE"/>
</dbReference>
<dbReference type="SUPFAM" id="SSF53784">
    <property type="entry name" value="Phosphofructokinase"/>
    <property type="match status" value="1"/>
</dbReference>
<dbReference type="PROSITE" id="PS00433">
    <property type="entry name" value="PHOSPHOFRUCTOKINASE"/>
    <property type="match status" value="1"/>
</dbReference>
<evidence type="ECO:0000255" key="1">
    <source>
        <dbReference type="HAMAP-Rule" id="MF_00339"/>
    </source>
</evidence>
<comment type="function">
    <text evidence="1">Catalyzes the phosphorylation of D-fructose 6-phosphate to fructose 1,6-bisphosphate by ATP, the first committing step of glycolysis.</text>
</comment>
<comment type="catalytic activity">
    <reaction evidence="1">
        <text>beta-D-fructose 6-phosphate + ATP = beta-D-fructose 1,6-bisphosphate + ADP + H(+)</text>
        <dbReference type="Rhea" id="RHEA:16109"/>
        <dbReference type="ChEBI" id="CHEBI:15378"/>
        <dbReference type="ChEBI" id="CHEBI:30616"/>
        <dbReference type="ChEBI" id="CHEBI:32966"/>
        <dbReference type="ChEBI" id="CHEBI:57634"/>
        <dbReference type="ChEBI" id="CHEBI:456216"/>
        <dbReference type="EC" id="2.7.1.11"/>
    </reaction>
</comment>
<comment type="cofactor">
    <cofactor evidence="1">
        <name>Mg(2+)</name>
        <dbReference type="ChEBI" id="CHEBI:18420"/>
    </cofactor>
</comment>
<comment type="activity regulation">
    <text evidence="1">Allosterically activated by ADP and other diphosphonucleosides, and allosterically inhibited by phosphoenolpyruvate.</text>
</comment>
<comment type="pathway">
    <text evidence="1">Carbohydrate degradation; glycolysis; D-glyceraldehyde 3-phosphate and glycerone phosphate from D-glucose: step 3/4.</text>
</comment>
<comment type="subunit">
    <text evidence="1">Homotetramer.</text>
</comment>
<comment type="subcellular location">
    <subcellularLocation>
        <location evidence="1">Cytoplasm</location>
    </subcellularLocation>
</comment>
<comment type="similarity">
    <text evidence="1">Belongs to the phosphofructokinase type A (PFKA) family. ATP-dependent PFK group I subfamily. Prokaryotic clade 'B1' sub-subfamily.</text>
</comment>
<sequence length="320" mass="35239">MIKKIGVLTSGGDAPGMNAAIRGVVRTALSEKLEVFGIYDGYLGLYENRMTLLDRYSVSDMINRGGTFLGSARFPGFYKNEIRTIAVNNLNKRNIDALVVIGGDGSYIGAQKLTKMGIPCISIPGTIDNDVAGTDYTIGYFTALETVVEAIDRLRDTSSSHQRISIVEVMGRYCGDLTLAAAIAGGCEFIVLPEIHYKKEELVSEIQAGIEKGKKHAIVAITEYICDVEKLAKYIEKKTNRETRATILGHIQRGGAPVVYDRILASRMGAYAVELLIEGYKGKCVGIQNEKMVFNDITDALKNMKRVFKKDWLITAKKLY</sequence>
<feature type="chain" id="PRO_0000111941" description="ATP-dependent 6-phosphofructokinase">
    <location>
        <begin position="1"/>
        <end position="320"/>
    </location>
</feature>
<feature type="active site" description="Proton acceptor" evidence="1">
    <location>
        <position position="128"/>
    </location>
</feature>
<feature type="binding site" evidence="1">
    <location>
        <position position="12"/>
    </location>
    <ligand>
        <name>ATP</name>
        <dbReference type="ChEBI" id="CHEBI:30616"/>
    </ligand>
</feature>
<feature type="binding site" evidence="1">
    <location>
        <begin position="22"/>
        <end position="26"/>
    </location>
    <ligand>
        <name>ADP</name>
        <dbReference type="ChEBI" id="CHEBI:456216"/>
        <note>allosteric activator; ligand shared between dimeric partners</note>
    </ligand>
</feature>
<feature type="binding site" evidence="1">
    <location>
        <begin position="55"/>
        <end position="60"/>
    </location>
    <ligand>
        <name>ADP</name>
        <dbReference type="ChEBI" id="CHEBI:456216"/>
        <note>allosteric activator; ligand shared between dimeric partners</note>
    </ligand>
</feature>
<feature type="binding site" evidence="1">
    <location>
        <begin position="73"/>
        <end position="74"/>
    </location>
    <ligand>
        <name>ATP</name>
        <dbReference type="ChEBI" id="CHEBI:30616"/>
    </ligand>
</feature>
<feature type="binding site" evidence="1">
    <location>
        <begin position="103"/>
        <end position="106"/>
    </location>
    <ligand>
        <name>ATP</name>
        <dbReference type="ChEBI" id="CHEBI:30616"/>
    </ligand>
</feature>
<feature type="binding site" evidence="1">
    <location>
        <position position="104"/>
    </location>
    <ligand>
        <name>Mg(2+)</name>
        <dbReference type="ChEBI" id="CHEBI:18420"/>
        <note>catalytic</note>
    </ligand>
</feature>
<feature type="binding site" description="in other chain" evidence="1">
    <location>
        <begin position="126"/>
        <end position="128"/>
    </location>
    <ligand>
        <name>substrate</name>
        <note>ligand shared between dimeric partners</note>
    </ligand>
</feature>
<feature type="binding site" description="in other chain" evidence="1">
    <location>
        <position position="155"/>
    </location>
    <ligand>
        <name>ADP</name>
        <dbReference type="ChEBI" id="CHEBI:456216"/>
        <note>allosteric activator; ligand shared between dimeric partners</note>
    </ligand>
</feature>
<feature type="binding site" evidence="1">
    <location>
        <position position="163"/>
    </location>
    <ligand>
        <name>substrate</name>
        <note>ligand shared between dimeric partners</note>
    </ligand>
</feature>
<feature type="binding site" description="in other chain" evidence="1">
    <location>
        <begin position="170"/>
        <end position="172"/>
    </location>
    <ligand>
        <name>substrate</name>
        <note>ligand shared between dimeric partners</note>
    </ligand>
</feature>
<feature type="binding site" description="in other chain" evidence="1">
    <location>
        <begin position="186"/>
        <end position="188"/>
    </location>
    <ligand>
        <name>ADP</name>
        <dbReference type="ChEBI" id="CHEBI:456216"/>
        <note>allosteric activator; ligand shared between dimeric partners</note>
    </ligand>
</feature>
<feature type="binding site" description="in other chain" evidence="1">
    <location>
        <position position="212"/>
    </location>
    <ligand>
        <name>ADP</name>
        <dbReference type="ChEBI" id="CHEBI:456216"/>
        <note>allosteric activator; ligand shared between dimeric partners</note>
    </ligand>
</feature>
<feature type="binding site" description="in other chain" evidence="1">
    <location>
        <begin position="214"/>
        <end position="216"/>
    </location>
    <ligand>
        <name>ADP</name>
        <dbReference type="ChEBI" id="CHEBI:456216"/>
        <note>allosteric activator; ligand shared between dimeric partners</note>
    </ligand>
</feature>
<feature type="binding site" description="in other chain" evidence="1">
    <location>
        <position position="223"/>
    </location>
    <ligand>
        <name>substrate</name>
        <note>ligand shared between dimeric partners</note>
    </ligand>
</feature>
<feature type="binding site" evidence="1">
    <location>
        <position position="244"/>
    </location>
    <ligand>
        <name>substrate</name>
        <note>ligand shared between dimeric partners</note>
    </ligand>
</feature>
<feature type="binding site" description="in other chain" evidence="1">
    <location>
        <begin position="250"/>
        <end position="253"/>
    </location>
    <ligand>
        <name>substrate</name>
        <note>ligand shared between dimeric partners</note>
    </ligand>
</feature>
<organism>
    <name type="scientific">Buchnera aphidicola subsp. Schizaphis graminum (strain Sg)</name>
    <dbReference type="NCBI Taxonomy" id="198804"/>
    <lineage>
        <taxon>Bacteria</taxon>
        <taxon>Pseudomonadati</taxon>
        <taxon>Pseudomonadota</taxon>
        <taxon>Gammaproteobacteria</taxon>
        <taxon>Enterobacterales</taxon>
        <taxon>Erwiniaceae</taxon>
        <taxon>Buchnera</taxon>
    </lineage>
</organism>
<reference key="1">
    <citation type="journal article" date="2002" name="Science">
        <title>50 million years of genomic stasis in endosymbiotic bacteria.</title>
        <authorList>
            <person name="Tamas I."/>
            <person name="Klasson L."/>
            <person name="Canbaeck B."/>
            <person name="Naeslund A.K."/>
            <person name="Eriksson A.-S."/>
            <person name="Wernegreen J.J."/>
            <person name="Sandstroem J.P."/>
            <person name="Moran N.A."/>
            <person name="Andersson S.G.E."/>
        </authorList>
    </citation>
    <scope>NUCLEOTIDE SEQUENCE [LARGE SCALE GENOMIC DNA]</scope>
    <source>
        <strain>Sg</strain>
    </source>
</reference>
<protein>
    <recommendedName>
        <fullName evidence="1">ATP-dependent 6-phosphofructokinase</fullName>
        <shortName evidence="1">ATP-PFK</shortName>
        <shortName evidence="1">Phosphofructokinase</shortName>
        <ecNumber evidence="1">2.7.1.11</ecNumber>
    </recommendedName>
    <alternativeName>
        <fullName evidence="1">Phosphohexokinase</fullName>
    </alternativeName>
</protein>
<accession>Q8K9N0</accession>
<keyword id="KW-0021">Allosteric enzyme</keyword>
<keyword id="KW-0067">ATP-binding</keyword>
<keyword id="KW-0963">Cytoplasm</keyword>
<keyword id="KW-0324">Glycolysis</keyword>
<keyword id="KW-0418">Kinase</keyword>
<keyword id="KW-0460">Magnesium</keyword>
<keyword id="KW-0479">Metal-binding</keyword>
<keyword id="KW-0547">Nucleotide-binding</keyword>
<keyword id="KW-0808">Transferase</keyword>
<gene>
    <name evidence="1" type="primary">pfkA</name>
    <name type="ordered locus">BUsg_295</name>
</gene>